<keyword id="KW-0106">Calcium</keyword>
<keyword id="KW-0119">Carbohydrate metabolism</keyword>
<keyword id="KW-0868">Chloride</keyword>
<keyword id="KW-1015">Disulfide bond</keyword>
<keyword id="KW-0326">Glycosidase</keyword>
<keyword id="KW-0378">Hydrolase</keyword>
<keyword id="KW-0479">Metal-binding</keyword>
<keyword id="KW-0873">Pyrrolidone carboxylic acid</keyword>
<keyword id="KW-0964">Secreted</keyword>
<keyword id="KW-0732">Signal</keyword>
<feature type="signal peptide" evidence="1">
    <location>
        <begin position="1"/>
        <end position="20"/>
    </location>
</feature>
<feature type="chain" id="PRO_0000001370" description="Alpha-amylase-related protein">
    <location>
        <begin position="21"/>
        <end position="494"/>
    </location>
</feature>
<feature type="active site" description="Nucleophile" evidence="2">
    <location>
        <position position="208"/>
    </location>
</feature>
<feature type="active site" description="Proton donor" evidence="2">
    <location>
        <position position="245"/>
    </location>
</feature>
<feature type="binding site" evidence="3">
    <location>
        <position position="118"/>
    </location>
    <ligand>
        <name>Ca(2+)</name>
        <dbReference type="ChEBI" id="CHEBI:29108"/>
    </ligand>
</feature>
<feature type="binding site" evidence="3">
    <location>
        <position position="169"/>
    </location>
    <ligand>
        <name>Ca(2+)</name>
        <dbReference type="ChEBI" id="CHEBI:29108"/>
    </ligand>
</feature>
<feature type="binding site" evidence="3">
    <location>
        <position position="178"/>
    </location>
    <ligand>
        <name>Ca(2+)</name>
        <dbReference type="ChEBI" id="CHEBI:29108"/>
    </ligand>
</feature>
<feature type="binding site" evidence="3">
    <location>
        <position position="206"/>
    </location>
    <ligand>
        <name>chloride</name>
        <dbReference type="ChEBI" id="CHEBI:17996"/>
    </ligand>
</feature>
<feature type="binding site" evidence="3">
    <location>
        <position position="212"/>
    </location>
    <ligand>
        <name>Ca(2+)</name>
        <dbReference type="ChEBI" id="CHEBI:29108"/>
    </ligand>
</feature>
<feature type="binding site" evidence="3">
    <location>
        <position position="308"/>
    </location>
    <ligand>
        <name>chloride</name>
        <dbReference type="ChEBI" id="CHEBI:17996"/>
    </ligand>
</feature>
<feature type="binding site" evidence="3">
    <location>
        <position position="343"/>
    </location>
    <ligand>
        <name>chloride</name>
        <dbReference type="ChEBI" id="CHEBI:17996"/>
    </ligand>
</feature>
<feature type="site" description="Transition state stabilizer" evidence="2">
    <location>
        <position position="310"/>
    </location>
</feature>
<feature type="modified residue" description="Pyrrolidone carboxylic acid" evidence="1">
    <location>
        <position position="21"/>
    </location>
</feature>
<feature type="disulfide bond" evidence="3">
    <location>
        <begin position="48"/>
        <end position="104"/>
    </location>
</feature>
<feature type="disulfide bond" evidence="3">
    <location>
        <begin position="157"/>
        <end position="171"/>
    </location>
</feature>
<feature type="disulfide bond" evidence="3">
    <location>
        <begin position="376"/>
        <end position="382"/>
    </location>
</feature>
<feature type="disulfide bond" evidence="4">
    <location>
        <begin position="418"/>
        <end position="441"/>
    </location>
</feature>
<feature type="disulfide bond" evidence="3">
    <location>
        <begin position="448"/>
        <end position="460"/>
    </location>
</feature>
<dbReference type="EC" id="3.2.1.1" evidence="2"/>
<dbReference type="EMBL" id="U96163">
    <property type="protein sequence ID" value="AAC39113.2"/>
    <property type="molecule type" value="Genomic_DNA"/>
</dbReference>
<dbReference type="SMR" id="O77020"/>
<dbReference type="CAZy" id="GH13">
    <property type="family name" value="Glycoside Hydrolase Family 13"/>
</dbReference>
<dbReference type="GO" id="GO:0005576">
    <property type="term" value="C:extracellular region"/>
    <property type="evidence" value="ECO:0007669"/>
    <property type="project" value="UniProtKB-SubCell"/>
</dbReference>
<dbReference type="GO" id="GO:0004556">
    <property type="term" value="F:alpha-amylase activity"/>
    <property type="evidence" value="ECO:0007669"/>
    <property type="project" value="UniProtKB-EC"/>
</dbReference>
<dbReference type="GO" id="GO:0046872">
    <property type="term" value="F:metal ion binding"/>
    <property type="evidence" value="ECO:0007669"/>
    <property type="project" value="UniProtKB-KW"/>
</dbReference>
<dbReference type="GO" id="GO:0005975">
    <property type="term" value="P:carbohydrate metabolic process"/>
    <property type="evidence" value="ECO:0007669"/>
    <property type="project" value="InterPro"/>
</dbReference>
<dbReference type="CDD" id="cd11317">
    <property type="entry name" value="AmyAc_bac_euk_AmyA"/>
    <property type="match status" value="1"/>
</dbReference>
<dbReference type="FunFam" id="3.20.20.80:FF:000119">
    <property type="entry name" value="Alpha-amylase-related protein"/>
    <property type="match status" value="1"/>
</dbReference>
<dbReference type="FunFam" id="2.60.40.1180:FF:000020">
    <property type="entry name" value="Pancreatic alpha-amylase"/>
    <property type="match status" value="1"/>
</dbReference>
<dbReference type="Gene3D" id="3.20.20.80">
    <property type="entry name" value="Glycosidases"/>
    <property type="match status" value="1"/>
</dbReference>
<dbReference type="Gene3D" id="2.60.40.1180">
    <property type="entry name" value="Golgi alpha-mannosidase II"/>
    <property type="match status" value="1"/>
</dbReference>
<dbReference type="InterPro" id="IPR006048">
    <property type="entry name" value="A-amylase/branching_C"/>
</dbReference>
<dbReference type="InterPro" id="IPR031319">
    <property type="entry name" value="A-amylase_C"/>
</dbReference>
<dbReference type="InterPro" id="IPR006046">
    <property type="entry name" value="Alpha_amylase"/>
</dbReference>
<dbReference type="InterPro" id="IPR006047">
    <property type="entry name" value="Glyco_hydro_13_cat_dom"/>
</dbReference>
<dbReference type="InterPro" id="IPR013780">
    <property type="entry name" value="Glyco_hydro_b"/>
</dbReference>
<dbReference type="InterPro" id="IPR017853">
    <property type="entry name" value="Glycoside_hydrolase_SF"/>
</dbReference>
<dbReference type="PANTHER" id="PTHR43447">
    <property type="entry name" value="ALPHA-AMYLASE"/>
    <property type="match status" value="1"/>
</dbReference>
<dbReference type="Pfam" id="PF00128">
    <property type="entry name" value="Alpha-amylase"/>
    <property type="match status" value="1"/>
</dbReference>
<dbReference type="Pfam" id="PF02806">
    <property type="entry name" value="Alpha-amylase_C"/>
    <property type="match status" value="1"/>
</dbReference>
<dbReference type="PRINTS" id="PR00110">
    <property type="entry name" value="ALPHAAMYLASE"/>
</dbReference>
<dbReference type="SMART" id="SM00642">
    <property type="entry name" value="Aamy"/>
    <property type="match status" value="1"/>
</dbReference>
<dbReference type="SMART" id="SM00632">
    <property type="entry name" value="Aamy_C"/>
    <property type="match status" value="1"/>
</dbReference>
<dbReference type="SUPFAM" id="SSF51445">
    <property type="entry name" value="(Trans)glycosidases"/>
    <property type="match status" value="1"/>
</dbReference>
<dbReference type="SUPFAM" id="SSF51011">
    <property type="entry name" value="Glycosyl hydrolase domain"/>
    <property type="match status" value="1"/>
</dbReference>
<name>AMYR_DROAV</name>
<protein>
    <recommendedName>
        <fullName>Alpha-amylase-related protein</fullName>
        <ecNumber evidence="2">3.2.1.1</ecNumber>
    </recommendedName>
</protein>
<gene>
    <name type="primary">Amyrel</name>
</gene>
<reference key="1">
    <citation type="submission" date="2001-12" db="EMBL/GenBank/DDBJ databases">
        <authorList>
            <person name="Da Lage J.-L."/>
        </authorList>
    </citation>
    <scope>NUCLEOTIDE SEQUENCE [GENOMIC DNA]</scope>
</reference>
<proteinExistence type="inferred from homology"/>
<comment type="catalytic activity">
    <reaction evidence="2">
        <text>Endohydrolysis of (1-&gt;4)-alpha-D-glucosidic linkages in polysaccharides containing three or more (1-&gt;4)-alpha-linked D-glucose units.</text>
        <dbReference type="EC" id="3.2.1.1"/>
    </reaction>
</comment>
<comment type="cofactor">
    <cofactor evidence="3">
        <name>Ca(2+)</name>
        <dbReference type="ChEBI" id="CHEBI:29108"/>
    </cofactor>
    <text evidence="3">Binds 1 Ca(2+) ion per subunit.</text>
</comment>
<comment type="cofactor">
    <cofactor evidence="3">
        <name>chloride</name>
        <dbReference type="ChEBI" id="CHEBI:17996"/>
    </cofactor>
    <text evidence="3">Binds 1 Cl(-) ion per subunit.</text>
</comment>
<comment type="subunit">
    <text evidence="1">Monomer.</text>
</comment>
<comment type="subcellular location">
    <subcellularLocation>
        <location evidence="5">Secreted</location>
    </subcellularLocation>
</comment>
<comment type="similarity">
    <text evidence="5">Belongs to the glycosyl hydrolase 13 family.</text>
</comment>
<organism>
    <name type="scientific">Drosophila auraria</name>
    <name type="common">Fruit fly</name>
    <dbReference type="NCBI Taxonomy" id="47315"/>
    <lineage>
        <taxon>Eukaryota</taxon>
        <taxon>Metazoa</taxon>
        <taxon>Ecdysozoa</taxon>
        <taxon>Arthropoda</taxon>
        <taxon>Hexapoda</taxon>
        <taxon>Insecta</taxon>
        <taxon>Pterygota</taxon>
        <taxon>Neoptera</taxon>
        <taxon>Endopterygota</taxon>
        <taxon>Diptera</taxon>
        <taxon>Brachycera</taxon>
        <taxon>Muscomorpha</taxon>
        <taxon>Ephydroidea</taxon>
        <taxon>Drosophilidae</taxon>
        <taxon>Drosophila</taxon>
        <taxon>Sophophora</taxon>
    </lineage>
</organism>
<accession>O77020</accession>
<evidence type="ECO:0000250" key="1"/>
<evidence type="ECO:0000250" key="2">
    <source>
        <dbReference type="UniProtKB" id="P04746"/>
    </source>
</evidence>
<evidence type="ECO:0000250" key="3">
    <source>
        <dbReference type="UniProtKB" id="P56634"/>
    </source>
</evidence>
<evidence type="ECO:0000255" key="4"/>
<evidence type="ECO:0000305" key="5"/>
<sequence>MIKFALALTLCLAGASLSLAQHNPQWWGNRNTIVHLFEWKWADIAEECEDFLAPRGFAGVQVSPVNENIISPGRPWWERYQPISYKLTTRSGNEEEFADMVRRCNDVGIRIYVDVLLNHMSGDFDGVAVGTAGTEAEPSKKSFPGVPYSAQDFHPSCEITDWNDRYQVQNCELVGLKDLNQHSDYVRSKLIEFLDHLIELGVAGFRVDAAKHMASEDLEYIYDNLSNLNIEHGFPHNARAFIFQEVIDHGHETVSREEYNGLGAVTEFRFSEEIGRAFRGNNALKWLQSWGTGWGFLDSDQALTFVDNHDNQRDQGSVLNYKSPKQYKMATAFHLAYPYGISRVMSSFAFDDHDTPPPQDAQENIISPEFGEDGGCLNGWICEHRWRQIYAMVGFKNAVRDTELSEWWDNGDNQIAFCRGNKGFLAINNNLYDLSQELNTCLPAGEYCDVISGSLIDGACTGKSVRVNERGYGYIHIGADEFDGVLALHVDAKV</sequence>